<name>RLIG1_PONAB</name>
<accession>Q5RFG5</accession>
<dbReference type="EC" id="6.5.1.3" evidence="1"/>
<dbReference type="EMBL" id="CR857193">
    <property type="protein sequence ID" value="CAH89492.1"/>
    <property type="molecule type" value="mRNA"/>
</dbReference>
<dbReference type="RefSeq" id="NP_001124644.1">
    <property type="nucleotide sequence ID" value="NM_001131172.2"/>
</dbReference>
<dbReference type="SMR" id="Q5RFG5"/>
<dbReference type="FunCoup" id="Q5RFG5">
    <property type="interactions" value="592"/>
</dbReference>
<dbReference type="STRING" id="9601.ENSPPYP00000005488"/>
<dbReference type="Ensembl" id="ENSPPYT00000005701.2">
    <property type="protein sequence ID" value="ENSPPYP00000005488.1"/>
    <property type="gene ID" value="ENSPPYG00000004813.2"/>
</dbReference>
<dbReference type="GeneID" id="100171485"/>
<dbReference type="KEGG" id="pon:100171485"/>
<dbReference type="CTD" id="91298"/>
<dbReference type="eggNOG" id="ENOG502QWBV">
    <property type="taxonomic scope" value="Eukaryota"/>
</dbReference>
<dbReference type="GeneTree" id="ENSGT00500000044938"/>
<dbReference type="HOGENOM" id="CLU_074918_0_0_1"/>
<dbReference type="InParanoid" id="Q5RFG5"/>
<dbReference type="OMA" id="KQFMYSA"/>
<dbReference type="OrthoDB" id="6021187at2759"/>
<dbReference type="TreeFam" id="TF328501"/>
<dbReference type="Proteomes" id="UP000001595">
    <property type="component" value="Chromosome 12"/>
</dbReference>
<dbReference type="GO" id="GO:0005524">
    <property type="term" value="F:ATP binding"/>
    <property type="evidence" value="ECO:0007669"/>
    <property type="project" value="UniProtKB-KW"/>
</dbReference>
<dbReference type="GO" id="GO:0003972">
    <property type="term" value="F:RNA ligase (ATP) activity"/>
    <property type="evidence" value="ECO:0007669"/>
    <property type="project" value="Ensembl"/>
</dbReference>
<dbReference type="GO" id="GO:0002244">
    <property type="term" value="P:hematopoietic progenitor cell differentiation"/>
    <property type="evidence" value="ECO:0007669"/>
    <property type="project" value="Ensembl"/>
</dbReference>
<dbReference type="GO" id="GO:0000302">
    <property type="term" value="P:response to reactive oxygen species"/>
    <property type="evidence" value="ECO:0007669"/>
    <property type="project" value="Ensembl"/>
</dbReference>
<dbReference type="GO" id="GO:0042245">
    <property type="term" value="P:RNA repair"/>
    <property type="evidence" value="ECO:0007669"/>
    <property type="project" value="UniProtKB-KW"/>
</dbReference>
<dbReference type="InterPro" id="IPR041211">
    <property type="entry name" value="RLIG1"/>
</dbReference>
<dbReference type="PANTHER" id="PTHR31219">
    <property type="entry name" value="CHROMOSOME 28 C12ORF29 HOMOLOG"/>
    <property type="match status" value="1"/>
</dbReference>
<dbReference type="PANTHER" id="PTHR31219:SF2">
    <property type="entry name" value="RNA LIGASE 1"/>
    <property type="match status" value="1"/>
</dbReference>
<dbReference type="Pfam" id="PF17720">
    <property type="entry name" value="RLIG1"/>
    <property type="match status" value="1"/>
</dbReference>
<protein>
    <recommendedName>
        <fullName>RNA ligase 1</fullName>
        <ecNumber evidence="1">6.5.1.3</ecNumber>
    </recommendedName>
    <alternativeName>
        <fullName>RNA ligase</fullName>
        <shortName>Rnl</shortName>
    </alternativeName>
</protein>
<reference key="1">
    <citation type="submission" date="2004-11" db="EMBL/GenBank/DDBJ databases">
        <authorList>
            <consortium name="The German cDNA consortium"/>
        </authorList>
    </citation>
    <scope>NUCLEOTIDE SEQUENCE [LARGE SCALE MRNA]</scope>
    <source>
        <tissue>Kidney</tissue>
    </source>
</reference>
<comment type="function">
    <text evidence="1">Functions as an RNA ligase, in vitro. The ligation reaction entails three nucleotidyl transfer steps. In the first step, the RNA ligase reacts with ATP in the absence of nucleic acid to form a covalent ligase-AMP intermediate and release pyrophosphate. In step 2, the ligase-AMP binds to the nucleic acid and transfers the adenylate to the 5'-PO4 terminus to form an adenylylated intermediate. In step 3, the RNA ligase directs the attack of the 3'-OH on the 5'-phosphoanhydride linkage, resulting in a repaired 3'-5' phosphodiester and release of AMP. Exhibits selectivity for single-stranded RNA substrates and may not have nick-sealing activity on double-stranded DNA-RNA hybrids. May play a role in maintaining RNA integrity under stress conditions, for example in response to reactive oxygen species (ROS).</text>
</comment>
<comment type="catalytic activity">
    <molecule>RNA ligase 1</molecule>
    <reaction evidence="1">
        <text>ATP + (ribonucleotide)n-3'-hydroxyl + 5'-phospho-(ribonucleotide)m = (ribonucleotide)n+m + AMP + diphosphate.</text>
        <dbReference type="EC" id="6.5.1.3"/>
    </reaction>
</comment>
<comment type="cofactor">
    <cofactor evidence="1">
        <name>Mg(2+)</name>
        <dbReference type="ChEBI" id="CHEBI:18420"/>
    </cofactor>
    <cofactor evidence="1">
        <name>Mn(2+)</name>
        <dbReference type="ChEBI" id="CHEBI:29035"/>
    </cofactor>
</comment>
<comment type="PTM">
    <text evidence="1">AMPylates itself (auto-AMPylation).</text>
</comment>
<feature type="chain" id="PRO_0000305274" description="RNA ligase 1">
    <location>
        <begin position="1"/>
        <end position="325"/>
    </location>
</feature>
<evidence type="ECO:0000250" key="1">
    <source>
        <dbReference type="UniProtKB" id="Q8N999"/>
    </source>
</evidence>
<sequence length="325" mass="37404">MKRLGSVQRKMPCVFVTEVKEEPSSKREHQPFKVLATETISHKALDADIYSAIPTEKVDGTCCYVTTYKDQPYLWARLDRKPNKQAEKRFKNFLHSKENAKEFFWNVEEDFKPAPECWIPAKEIEQINGNPVPDENGHIPGWVPVEKNNKQYCWHSSVVNYEFEIALVLKHHPDDSGLLEISAVPLSDLLEQTLELVGTNINGNPYGLGSKKHPLHLLIPHGAFQIRNLPSLKHNDLLSWFEGCKEGKIEGIVWHCSDGCLIKVHRHHLGLCWPIPDTYMNSRPVIINMNLNKCDSAFDIKCLFNHFLKIDNQKFARLKDIIFDV</sequence>
<proteinExistence type="evidence at transcript level"/>
<organism>
    <name type="scientific">Pongo abelii</name>
    <name type="common">Sumatran orangutan</name>
    <name type="synonym">Pongo pygmaeus abelii</name>
    <dbReference type="NCBI Taxonomy" id="9601"/>
    <lineage>
        <taxon>Eukaryota</taxon>
        <taxon>Metazoa</taxon>
        <taxon>Chordata</taxon>
        <taxon>Craniata</taxon>
        <taxon>Vertebrata</taxon>
        <taxon>Euteleostomi</taxon>
        <taxon>Mammalia</taxon>
        <taxon>Eutheria</taxon>
        <taxon>Euarchontoglires</taxon>
        <taxon>Primates</taxon>
        <taxon>Haplorrhini</taxon>
        <taxon>Catarrhini</taxon>
        <taxon>Hominidae</taxon>
        <taxon>Pongo</taxon>
    </lineage>
</organism>
<keyword id="KW-0067">ATP-binding</keyword>
<keyword id="KW-0436">Ligase</keyword>
<keyword id="KW-0547">Nucleotide-binding</keyword>
<keyword id="KW-1185">Reference proteome</keyword>
<keyword id="KW-0692">RNA repair</keyword>